<protein>
    <recommendedName>
        <fullName evidence="10">Akirin-2</fullName>
    </recommendedName>
</protein>
<reference key="1">
    <citation type="journal article" date="2005" name="Science">
        <title>The transcriptional landscape of the mammalian genome.</title>
        <authorList>
            <person name="Carninci P."/>
            <person name="Kasukawa T."/>
            <person name="Katayama S."/>
            <person name="Gough J."/>
            <person name="Frith M.C."/>
            <person name="Maeda N."/>
            <person name="Oyama R."/>
            <person name="Ravasi T."/>
            <person name="Lenhard B."/>
            <person name="Wells C."/>
            <person name="Kodzius R."/>
            <person name="Shimokawa K."/>
            <person name="Bajic V.B."/>
            <person name="Brenner S.E."/>
            <person name="Batalov S."/>
            <person name="Forrest A.R."/>
            <person name="Zavolan M."/>
            <person name="Davis M.J."/>
            <person name="Wilming L.G."/>
            <person name="Aidinis V."/>
            <person name="Allen J.E."/>
            <person name="Ambesi-Impiombato A."/>
            <person name="Apweiler R."/>
            <person name="Aturaliya R.N."/>
            <person name="Bailey T.L."/>
            <person name="Bansal M."/>
            <person name="Baxter L."/>
            <person name="Beisel K.W."/>
            <person name="Bersano T."/>
            <person name="Bono H."/>
            <person name="Chalk A.M."/>
            <person name="Chiu K.P."/>
            <person name="Choudhary V."/>
            <person name="Christoffels A."/>
            <person name="Clutterbuck D.R."/>
            <person name="Crowe M.L."/>
            <person name="Dalla E."/>
            <person name="Dalrymple B.P."/>
            <person name="de Bono B."/>
            <person name="Della Gatta G."/>
            <person name="di Bernardo D."/>
            <person name="Down T."/>
            <person name="Engstrom P."/>
            <person name="Fagiolini M."/>
            <person name="Faulkner G."/>
            <person name="Fletcher C.F."/>
            <person name="Fukushima T."/>
            <person name="Furuno M."/>
            <person name="Futaki S."/>
            <person name="Gariboldi M."/>
            <person name="Georgii-Hemming P."/>
            <person name="Gingeras T.R."/>
            <person name="Gojobori T."/>
            <person name="Green R.E."/>
            <person name="Gustincich S."/>
            <person name="Harbers M."/>
            <person name="Hayashi Y."/>
            <person name="Hensch T.K."/>
            <person name="Hirokawa N."/>
            <person name="Hill D."/>
            <person name="Huminiecki L."/>
            <person name="Iacono M."/>
            <person name="Ikeo K."/>
            <person name="Iwama A."/>
            <person name="Ishikawa T."/>
            <person name="Jakt M."/>
            <person name="Kanapin A."/>
            <person name="Katoh M."/>
            <person name="Kawasawa Y."/>
            <person name="Kelso J."/>
            <person name="Kitamura H."/>
            <person name="Kitano H."/>
            <person name="Kollias G."/>
            <person name="Krishnan S.P."/>
            <person name="Kruger A."/>
            <person name="Kummerfeld S.K."/>
            <person name="Kurochkin I.V."/>
            <person name="Lareau L.F."/>
            <person name="Lazarevic D."/>
            <person name="Lipovich L."/>
            <person name="Liu J."/>
            <person name="Liuni S."/>
            <person name="McWilliam S."/>
            <person name="Madan Babu M."/>
            <person name="Madera M."/>
            <person name="Marchionni L."/>
            <person name="Matsuda H."/>
            <person name="Matsuzawa S."/>
            <person name="Miki H."/>
            <person name="Mignone F."/>
            <person name="Miyake S."/>
            <person name="Morris K."/>
            <person name="Mottagui-Tabar S."/>
            <person name="Mulder N."/>
            <person name="Nakano N."/>
            <person name="Nakauchi H."/>
            <person name="Ng P."/>
            <person name="Nilsson R."/>
            <person name="Nishiguchi S."/>
            <person name="Nishikawa S."/>
            <person name="Nori F."/>
            <person name="Ohara O."/>
            <person name="Okazaki Y."/>
            <person name="Orlando V."/>
            <person name="Pang K.C."/>
            <person name="Pavan W.J."/>
            <person name="Pavesi G."/>
            <person name="Pesole G."/>
            <person name="Petrovsky N."/>
            <person name="Piazza S."/>
            <person name="Reed J."/>
            <person name="Reid J.F."/>
            <person name="Ring B.Z."/>
            <person name="Ringwald M."/>
            <person name="Rost B."/>
            <person name="Ruan Y."/>
            <person name="Salzberg S.L."/>
            <person name="Sandelin A."/>
            <person name="Schneider C."/>
            <person name="Schoenbach C."/>
            <person name="Sekiguchi K."/>
            <person name="Semple C.A."/>
            <person name="Seno S."/>
            <person name="Sessa L."/>
            <person name="Sheng Y."/>
            <person name="Shibata Y."/>
            <person name="Shimada H."/>
            <person name="Shimada K."/>
            <person name="Silva D."/>
            <person name="Sinclair B."/>
            <person name="Sperling S."/>
            <person name="Stupka E."/>
            <person name="Sugiura K."/>
            <person name="Sultana R."/>
            <person name="Takenaka Y."/>
            <person name="Taki K."/>
            <person name="Tammoja K."/>
            <person name="Tan S.L."/>
            <person name="Tang S."/>
            <person name="Taylor M.S."/>
            <person name="Tegner J."/>
            <person name="Teichmann S.A."/>
            <person name="Ueda H.R."/>
            <person name="van Nimwegen E."/>
            <person name="Verardo R."/>
            <person name="Wei C.L."/>
            <person name="Yagi K."/>
            <person name="Yamanishi H."/>
            <person name="Zabarovsky E."/>
            <person name="Zhu S."/>
            <person name="Zimmer A."/>
            <person name="Hide W."/>
            <person name="Bult C."/>
            <person name="Grimmond S.M."/>
            <person name="Teasdale R.D."/>
            <person name="Liu E.T."/>
            <person name="Brusic V."/>
            <person name="Quackenbush J."/>
            <person name="Wahlestedt C."/>
            <person name="Mattick J.S."/>
            <person name="Hume D.A."/>
            <person name="Kai C."/>
            <person name="Sasaki D."/>
            <person name="Tomaru Y."/>
            <person name="Fukuda S."/>
            <person name="Kanamori-Katayama M."/>
            <person name="Suzuki M."/>
            <person name="Aoki J."/>
            <person name="Arakawa T."/>
            <person name="Iida J."/>
            <person name="Imamura K."/>
            <person name="Itoh M."/>
            <person name="Kato T."/>
            <person name="Kawaji H."/>
            <person name="Kawagashira N."/>
            <person name="Kawashima T."/>
            <person name="Kojima M."/>
            <person name="Kondo S."/>
            <person name="Konno H."/>
            <person name="Nakano K."/>
            <person name="Ninomiya N."/>
            <person name="Nishio T."/>
            <person name="Okada M."/>
            <person name="Plessy C."/>
            <person name="Shibata K."/>
            <person name="Shiraki T."/>
            <person name="Suzuki S."/>
            <person name="Tagami M."/>
            <person name="Waki K."/>
            <person name="Watahiki A."/>
            <person name="Okamura-Oho Y."/>
            <person name="Suzuki H."/>
            <person name="Kawai J."/>
            <person name="Hayashizaki Y."/>
        </authorList>
    </citation>
    <scope>NUCLEOTIDE SEQUENCE [LARGE SCALE MRNA]</scope>
    <source>
        <strain evidence="12">C57BL/6J</strain>
        <tissue evidence="12">Testis</tissue>
    </source>
</reference>
<reference key="2">
    <citation type="journal article" date="2009" name="PLoS Biol.">
        <title>Lineage-specific biology revealed by a finished genome assembly of the mouse.</title>
        <authorList>
            <person name="Church D.M."/>
            <person name="Goodstadt L."/>
            <person name="Hillier L.W."/>
            <person name="Zody M.C."/>
            <person name="Goldstein S."/>
            <person name="She X."/>
            <person name="Bult C.J."/>
            <person name="Agarwala R."/>
            <person name="Cherry J.L."/>
            <person name="DiCuccio M."/>
            <person name="Hlavina W."/>
            <person name="Kapustin Y."/>
            <person name="Meric P."/>
            <person name="Maglott D."/>
            <person name="Birtle Z."/>
            <person name="Marques A.C."/>
            <person name="Graves T."/>
            <person name="Zhou S."/>
            <person name="Teague B."/>
            <person name="Potamousis K."/>
            <person name="Churas C."/>
            <person name="Place M."/>
            <person name="Herschleb J."/>
            <person name="Runnheim R."/>
            <person name="Forrest D."/>
            <person name="Amos-Landgraf J."/>
            <person name="Schwartz D.C."/>
            <person name="Cheng Z."/>
            <person name="Lindblad-Toh K."/>
            <person name="Eichler E.E."/>
            <person name="Ponting C.P."/>
        </authorList>
    </citation>
    <scope>NUCLEOTIDE SEQUENCE [LARGE SCALE GENOMIC DNA]</scope>
    <source>
        <strain>C57BL/6J</strain>
    </source>
</reference>
<reference key="3">
    <citation type="journal article" date="2007" name="Proc. Natl. Acad. Sci. U.S.A.">
        <title>Large-scale phosphorylation analysis of mouse liver.</title>
        <authorList>
            <person name="Villen J."/>
            <person name="Beausoleil S.A."/>
            <person name="Gerber S.A."/>
            <person name="Gygi S.P."/>
        </authorList>
    </citation>
    <scope>PHOSPHORYLATION [LARGE SCALE ANALYSIS] AT SER-18 AND SER-21</scope>
    <scope>IDENTIFICATION BY MASS SPECTROMETRY [LARGE SCALE ANALYSIS]</scope>
    <source>
        <tissue>Liver</tissue>
    </source>
</reference>
<reference key="4">
    <citation type="journal article" date="2008" name="Nat. Immunol.">
        <title>Akirins are highly conserved nuclear proteins required for NF-kappaB-dependent gene expression in Drosophila and mice.</title>
        <authorList>
            <person name="Goto A."/>
            <person name="Matsushita K."/>
            <person name="Gesellchen V."/>
            <person name="El Chamy L."/>
            <person name="Kuttenkeuler D."/>
            <person name="Takeuchi O."/>
            <person name="Hoffmann J.A."/>
            <person name="Akira S."/>
            <person name="Boutros M."/>
            <person name="Reichhart J.-M."/>
        </authorList>
    </citation>
    <scope>FUNCTION</scope>
    <scope>DISRUPTION PHENOTYPE</scope>
</reference>
<reference key="5">
    <citation type="journal article" date="2008" name="Nat. Immunol.">
        <authorList>
            <person name="Goto A."/>
            <person name="Matsushita K."/>
            <person name="Gesellchen V."/>
            <person name="El Chamy L."/>
            <person name="Kuttenkeuler D."/>
            <person name="Takeuchi O."/>
            <person name="Hoffmann J.A."/>
            <person name="Akira S."/>
            <person name="Boutros M."/>
            <person name="Reichhart J.-M."/>
        </authorList>
    </citation>
    <scope>ERRATUM OF PUBMED:18066067</scope>
</reference>
<reference key="6">
    <citation type="journal article" date="2010" name="Cell">
        <title>A tissue-specific atlas of mouse protein phosphorylation and expression.</title>
        <authorList>
            <person name="Huttlin E.L."/>
            <person name="Jedrychowski M.P."/>
            <person name="Elias J.E."/>
            <person name="Goswami T."/>
            <person name="Rad R."/>
            <person name="Beausoleil S.A."/>
            <person name="Villen J."/>
            <person name="Haas W."/>
            <person name="Sowa M.E."/>
            <person name="Gygi S.P."/>
        </authorList>
    </citation>
    <scope>PHOSPHORYLATION [LARGE SCALE ANALYSIS] AT SER-18; SER-21 AND SER-55</scope>
    <scope>IDENTIFICATION BY MASS SPECTROMETRY [LARGE SCALE ANALYSIS]</scope>
    <source>
        <tissue>Brain</tissue>
        <tissue>Kidney</tissue>
        <tissue>Lung</tissue>
        <tissue>Spleen</tissue>
        <tissue>Testis</tissue>
    </source>
</reference>
<reference key="7">
    <citation type="journal article" date="2014" name="EMBO J.">
        <title>Akirin2 is critical for inducing inflammatory genes by bridging IkappaB-zeta and the SWI/SNF complex.</title>
        <authorList>
            <person name="Tartey S."/>
            <person name="Matsushita K."/>
            <person name="Vandenbon A."/>
            <person name="Ori D."/>
            <person name="Imamura T."/>
            <person name="Mino T."/>
            <person name="Standley D.M."/>
            <person name="Hoffmann J.A."/>
            <person name="Reichhart J.M."/>
            <person name="Akira S."/>
            <person name="Takeuchi O."/>
        </authorList>
    </citation>
    <scope>FUNCTION</scope>
    <scope>SUBCELLULAR LOCATION</scope>
    <scope>DISRUPTION PHENOTYPE</scope>
    <scope>INTERACTION WITH NFKBIZ AND SMARCD1</scope>
</reference>
<reference key="8">
    <citation type="journal article" date="2015" name="J. Immunol.">
        <title>Essential function for the nuclear protein Akirin2 in B Cell activation and humoral immune responses.</title>
        <authorList>
            <person name="Tartey S."/>
            <person name="Matsushita K."/>
            <person name="Imamura T."/>
            <person name="Wakabayashi A."/>
            <person name="Ori D."/>
            <person name="Mino T."/>
            <person name="Takeuchi O."/>
        </authorList>
    </citation>
    <scope>FUNCTION</scope>
    <scope>DISRUPTION PHENOTYPE</scope>
</reference>
<reference key="9">
    <citation type="journal article" date="2016" name="Neural Dev.">
        <title>Akirin2 is essential for the formation of the cerebral cortex.</title>
        <authorList>
            <person name="Bosch P.J."/>
            <person name="Fuller L.C."/>
            <person name="Sleeth C.M."/>
            <person name="Weiner J.A."/>
        </authorList>
    </citation>
    <scope>FUNCTION</scope>
    <scope>DEVELOPMENTAL STAGE</scope>
    <scope>DISRUPTION PHENOTYPE</scope>
</reference>
<reference key="10">
    <citation type="journal article" date="2018" name="Sci. Rep.">
        <title>An essential role for the nuclear protein Akirin2 in mouse limb interdigital tissue regression.</title>
        <authorList>
            <person name="Bosch P.J."/>
            <person name="Fuller L.C."/>
            <person name="Weiner J.A."/>
        </authorList>
    </citation>
    <scope>FUNCTION</scope>
    <scope>SUBCELLULAR LOCATION</scope>
    <scope>DEVELOPMENTAL STAGE</scope>
    <scope>DISRUPTION PHENOTYPE</scope>
</reference>
<reference key="11">
    <citation type="journal article" date="2019" name="Genesis">
        <title>A critical role for the nuclear protein Akirin2 in the formation of mammalian muscle in vivo.</title>
        <authorList>
            <person name="Bosch P.J."/>
            <person name="Fuller L.C."/>
            <person name="Weiner J.A."/>
        </authorList>
    </citation>
    <scope>FUNCTION</scope>
    <scope>DEVELOPMENTAL STAGE</scope>
    <scope>DISRUPTION PHENOTYPE</scope>
</reference>
<dbReference type="EMBL" id="AK005836">
    <property type="protein sequence ID" value="BAB24265.1"/>
    <property type="status" value="ALT_FRAME"/>
    <property type="molecule type" value="mRNA"/>
</dbReference>
<dbReference type="EMBL" id="AL807397">
    <property type="status" value="NOT_ANNOTATED_CDS"/>
    <property type="molecule type" value="Genomic_DNA"/>
</dbReference>
<dbReference type="CCDS" id="CCDS18027.1"/>
<dbReference type="RefSeq" id="NP_001007590.2">
    <property type="nucleotide sequence ID" value="NM_001007589.3"/>
</dbReference>
<dbReference type="RefSeq" id="XP_011248362.1">
    <property type="nucleotide sequence ID" value="XM_011250060.4"/>
</dbReference>
<dbReference type="SMR" id="B1AXD8"/>
<dbReference type="BioGRID" id="241383">
    <property type="interactions" value="1"/>
</dbReference>
<dbReference type="FunCoup" id="B1AXD8">
    <property type="interactions" value="4508"/>
</dbReference>
<dbReference type="IntAct" id="B1AXD8">
    <property type="interactions" value="7"/>
</dbReference>
<dbReference type="MINT" id="B1AXD8"/>
<dbReference type="STRING" id="10090.ENSMUSP00000081322"/>
<dbReference type="iPTMnet" id="B1AXD8"/>
<dbReference type="PhosphoSitePlus" id="B1AXD8"/>
<dbReference type="jPOST" id="B1AXD8"/>
<dbReference type="PaxDb" id="10090-ENSMUSP00000081322"/>
<dbReference type="PeptideAtlas" id="B1AXD8"/>
<dbReference type="ProteomicsDB" id="296153"/>
<dbReference type="Pumba" id="B1AXD8"/>
<dbReference type="Antibodypedia" id="31831">
    <property type="antibodies" value="179 antibodies from 26 providers"/>
</dbReference>
<dbReference type="DNASU" id="433693"/>
<dbReference type="Ensembl" id="ENSMUST00000084299.6">
    <property type="protein sequence ID" value="ENSMUSP00000081322.6"/>
    <property type="gene ID" value="ENSMUSG00000028291.8"/>
</dbReference>
<dbReference type="GeneID" id="433693"/>
<dbReference type="KEGG" id="mmu:433693"/>
<dbReference type="UCSC" id="uc008sga.1">
    <property type="organism name" value="mouse"/>
</dbReference>
<dbReference type="AGR" id="MGI:1889364"/>
<dbReference type="CTD" id="55122"/>
<dbReference type="MGI" id="MGI:1889364">
    <property type="gene designation" value="Akirin2"/>
</dbReference>
<dbReference type="VEuPathDB" id="HostDB:ENSMUSG00000028291"/>
<dbReference type="eggNOG" id="KOG4330">
    <property type="taxonomic scope" value="Eukaryota"/>
</dbReference>
<dbReference type="GeneTree" id="ENSGT00940000156096"/>
<dbReference type="HOGENOM" id="CLU_119227_0_0_1"/>
<dbReference type="InParanoid" id="B1AXD8"/>
<dbReference type="OMA" id="QADGCCP"/>
<dbReference type="OrthoDB" id="10039914at2759"/>
<dbReference type="PhylomeDB" id="B1AXD8"/>
<dbReference type="TreeFam" id="TF317123"/>
<dbReference type="BioGRID-ORCS" id="433693">
    <property type="hits" value="17 hits in 78 CRISPR screens"/>
</dbReference>
<dbReference type="ChiTaRS" id="Akirin2">
    <property type="organism name" value="mouse"/>
</dbReference>
<dbReference type="PRO" id="PR:B1AXD8"/>
<dbReference type="Proteomes" id="UP000000589">
    <property type="component" value="Chromosome 4"/>
</dbReference>
<dbReference type="RNAct" id="B1AXD8">
    <property type="molecule type" value="protein"/>
</dbReference>
<dbReference type="Bgee" id="ENSMUSG00000028291">
    <property type="expression patterns" value="Expressed in animal zygote and 259 other cell types or tissues"/>
</dbReference>
<dbReference type="GO" id="GO:0005737">
    <property type="term" value="C:cytoplasm"/>
    <property type="evidence" value="ECO:0000314"/>
    <property type="project" value="UniProtKB"/>
</dbReference>
<dbReference type="GO" id="GO:0016020">
    <property type="term" value="C:membrane"/>
    <property type="evidence" value="ECO:0000314"/>
    <property type="project" value="UniProtKB"/>
</dbReference>
<dbReference type="GO" id="GO:0005654">
    <property type="term" value="C:nucleoplasm"/>
    <property type="evidence" value="ECO:0007669"/>
    <property type="project" value="Ensembl"/>
</dbReference>
<dbReference type="GO" id="GO:0005634">
    <property type="term" value="C:nucleus"/>
    <property type="evidence" value="ECO:0000314"/>
    <property type="project" value="UniProtKB"/>
</dbReference>
<dbReference type="GO" id="GO:0017053">
    <property type="term" value="C:transcription repressor complex"/>
    <property type="evidence" value="ECO:0000250"/>
    <property type="project" value="UniProtKB"/>
</dbReference>
<dbReference type="GO" id="GO:0019899">
    <property type="term" value="F:enzyme binding"/>
    <property type="evidence" value="ECO:0007669"/>
    <property type="project" value="Ensembl"/>
</dbReference>
<dbReference type="GO" id="GO:0042802">
    <property type="term" value="F:identical protein binding"/>
    <property type="evidence" value="ECO:0007669"/>
    <property type="project" value="Ensembl"/>
</dbReference>
<dbReference type="GO" id="GO:0030674">
    <property type="term" value="F:protein-macromolecule adaptor activity"/>
    <property type="evidence" value="ECO:0000314"/>
    <property type="project" value="UniProtKB"/>
</dbReference>
<dbReference type="GO" id="GO:0002250">
    <property type="term" value="P:adaptive immune response"/>
    <property type="evidence" value="ECO:0007669"/>
    <property type="project" value="UniProtKB-KW"/>
</dbReference>
<dbReference type="GO" id="GO:0021987">
    <property type="term" value="P:cerebral cortex development"/>
    <property type="evidence" value="ECO:0000315"/>
    <property type="project" value="UniProtKB"/>
</dbReference>
<dbReference type="GO" id="GO:0042742">
    <property type="term" value="P:defense response to bacterium"/>
    <property type="evidence" value="ECO:0000315"/>
    <property type="project" value="UniProtKB"/>
</dbReference>
<dbReference type="GO" id="GO:0009792">
    <property type="term" value="P:embryo development ending in birth or egg hatching"/>
    <property type="evidence" value="ECO:0000315"/>
    <property type="project" value="UniProtKB"/>
</dbReference>
<dbReference type="GO" id="GO:0045087">
    <property type="term" value="P:innate immune response"/>
    <property type="evidence" value="ECO:0007669"/>
    <property type="project" value="UniProtKB-KW"/>
</dbReference>
<dbReference type="GO" id="GO:0071630">
    <property type="term" value="P:nuclear protein quality control by the ubiquitin-proteasome system"/>
    <property type="evidence" value="ECO:0000250"/>
    <property type="project" value="UniProtKB"/>
</dbReference>
<dbReference type="GO" id="GO:0002821">
    <property type="term" value="P:positive regulation of adaptive immune response"/>
    <property type="evidence" value="ECO:0000315"/>
    <property type="project" value="UniProtKB"/>
</dbReference>
<dbReference type="GO" id="GO:0050871">
    <property type="term" value="P:positive regulation of B cell activation"/>
    <property type="evidence" value="ECO:0000315"/>
    <property type="project" value="UniProtKB"/>
</dbReference>
<dbReference type="GO" id="GO:0045089">
    <property type="term" value="P:positive regulation of innate immune response"/>
    <property type="evidence" value="ECO:0000315"/>
    <property type="project" value="UniProtKB"/>
</dbReference>
<dbReference type="GO" id="GO:0032755">
    <property type="term" value="P:positive regulation of interleukin-6 production"/>
    <property type="evidence" value="ECO:0000314"/>
    <property type="project" value="UniProtKB"/>
</dbReference>
<dbReference type="GO" id="GO:0045944">
    <property type="term" value="P:positive regulation of transcription by RNA polymerase II"/>
    <property type="evidence" value="ECO:0000314"/>
    <property type="project" value="UniProtKB"/>
</dbReference>
<dbReference type="GO" id="GO:0031144">
    <property type="term" value="P:proteasome localization"/>
    <property type="evidence" value="ECO:0000250"/>
    <property type="project" value="UniProtKB"/>
</dbReference>
<dbReference type="GO" id="GO:0006606">
    <property type="term" value="P:protein import into nucleus"/>
    <property type="evidence" value="ECO:0000250"/>
    <property type="project" value="UniProtKB"/>
</dbReference>
<dbReference type="GO" id="GO:0051147">
    <property type="term" value="P:regulation of muscle cell differentiation"/>
    <property type="evidence" value="ECO:0000315"/>
    <property type="project" value="UniProtKB"/>
</dbReference>
<dbReference type="GO" id="GO:0032496">
    <property type="term" value="P:response to lipopolysaccharide"/>
    <property type="evidence" value="ECO:0000315"/>
    <property type="project" value="MGI"/>
</dbReference>
<dbReference type="CDD" id="cd22244">
    <property type="entry name" value="akirin-2"/>
    <property type="match status" value="1"/>
</dbReference>
<dbReference type="InterPro" id="IPR024132">
    <property type="entry name" value="Akirin"/>
</dbReference>
<dbReference type="PANTHER" id="PTHR13293:SF8">
    <property type="entry name" value="AKIRIN-2"/>
    <property type="match status" value="1"/>
</dbReference>
<dbReference type="PANTHER" id="PTHR13293">
    <property type="entry name" value="AKIRIN-RELATED"/>
    <property type="match status" value="1"/>
</dbReference>
<organism>
    <name type="scientific">Mus musculus</name>
    <name type="common">Mouse</name>
    <dbReference type="NCBI Taxonomy" id="10090"/>
    <lineage>
        <taxon>Eukaryota</taxon>
        <taxon>Metazoa</taxon>
        <taxon>Chordata</taxon>
        <taxon>Craniata</taxon>
        <taxon>Vertebrata</taxon>
        <taxon>Euteleostomi</taxon>
        <taxon>Mammalia</taxon>
        <taxon>Eutheria</taxon>
        <taxon>Euarchontoglires</taxon>
        <taxon>Glires</taxon>
        <taxon>Rodentia</taxon>
        <taxon>Myomorpha</taxon>
        <taxon>Muroidea</taxon>
        <taxon>Muridae</taxon>
        <taxon>Murinae</taxon>
        <taxon>Mus</taxon>
        <taxon>Mus</taxon>
    </lineage>
</organism>
<accession>B1AXD8</accession>
<accession>Q641L8</accession>
<accession>Q9DAH4</accession>
<sequence length="201" mass="22113">MACGATLKRTLDFDPLLSPASPKRRRCAPLSAPASAAASPAAATAAAAASAAAASPQKYLRMEPSPFGDVSSRLTTEQILYNIKQEYKRMQKRRHLEASFQQADPGCTSDSQPHAFLISGPASPGTSSATSSPLKKEQPLFTLRQVGMICERLLKEREEKVREEYEEILNTKLAEQYDAFVKFTHDQIMRRYGEQPASYVS</sequence>
<feature type="chain" id="PRO_0000355121" description="Akirin-2">
    <location>
        <begin position="1"/>
        <end position="201"/>
    </location>
</feature>
<feature type="short sequence motif" description="Nuclear localization signal" evidence="11">
    <location>
        <begin position="23"/>
        <end position="28"/>
    </location>
</feature>
<feature type="short sequence motif" description="SYVS motif" evidence="2">
    <location>
        <begin position="198"/>
        <end position="201"/>
    </location>
</feature>
<feature type="modified residue" description="Phosphoserine" evidence="14 15">
    <location>
        <position position="18"/>
    </location>
</feature>
<feature type="modified residue" description="Phosphoserine" evidence="14 15">
    <location>
        <position position="21"/>
    </location>
</feature>
<feature type="modified residue" description="Phosphoserine" evidence="15">
    <location>
        <position position="55"/>
    </location>
</feature>
<feature type="sequence conflict" description="In Ref. 1; BAB24265." evidence="10" ref="1">
    <original>A</original>
    <variation>V</variation>
    <location>
        <position position="48"/>
    </location>
</feature>
<feature type="sequence conflict" description="In Ref. 1; BAB24265." evidence="10" ref="1">
    <original>V</original>
    <variation>G</variation>
    <location>
        <position position="181"/>
    </location>
</feature>
<keyword id="KW-1064">Adaptive immunity</keyword>
<keyword id="KW-0963">Cytoplasm</keyword>
<keyword id="KW-0217">Developmental protein</keyword>
<keyword id="KW-0391">Immunity</keyword>
<keyword id="KW-0399">Innate immunity</keyword>
<keyword id="KW-0472">Membrane</keyword>
<keyword id="KW-0539">Nucleus</keyword>
<keyword id="KW-0597">Phosphoprotein</keyword>
<keyword id="KW-0653">Protein transport</keyword>
<keyword id="KW-1185">Reference proteome</keyword>
<keyword id="KW-0678">Repressor</keyword>
<keyword id="KW-0804">Transcription</keyword>
<keyword id="KW-0805">Transcription regulation</keyword>
<keyword id="KW-0813">Transport</keyword>
<keyword id="KW-0832">Ubl conjugation</keyword>
<proteinExistence type="evidence at protein level"/>
<gene>
    <name evidence="9 13" type="primary">Akirin2</name>
</gene>
<name>AKIR2_MOUSE</name>
<comment type="function">
    <text evidence="2 3 4 5 6 7 8">Molecular adapter that acts as a bridge between a variety of multiprotein complexes, and which is involved in embryonic development, immunity, myogenesis and brain development (PubMed:25107474, PubMed:26041538, PubMed:27871306, PubMed:30116001, PubMed:30801883). Plays a key role in nuclear protein degradation by promoting import of proteasomes into the nucleus: directly binds to fully assembled 20S proteasomes at one end and to nuclear import receptor IPO9 at the other end, bridging them together and mediating the import of pre-assembled proteasome complexes through the nuclear pore (By similarity). Involved in innate immunity by regulating the production of interleukin-6 (IL6) downstream of Toll-like receptor (TLR): acts by bridging the NF-kappa-B inhibitor NFKBIZ and the SWI/SNF complex, leading to promote induction of IL6 (PubMed:18066067, PubMed:25107474). Also involved in adaptive immunity by promoting B-cell activation (PubMed:26041538). Involved in brain development: required for the survival and proliferation of cerebral cortical progenitor cells (PubMed:27871306). Involved in myogenesis: required for skeletal muscle formation and skeletal development, possibly by regulating expression of muscle differentiation factors (PubMed:30801883). Also plays a role in facilitating interdigital tissue regression during limb development (PubMed:30116001).</text>
</comment>
<comment type="subunit">
    <text evidence="1 2 4">Homodimer (By similarity). Interacts with IPO9; the interaction is direct (By similarity). Associates with 20S and 26S proteasomes (By similarity). Interacts with SMARCD1; promoting SWI/SNF complex recruitment (PubMed:25107474). Interacts with NFKBIZ (PubMed:25107474). Interacts with YWHAB (By similarity).</text>
</comment>
<comment type="interaction">
    <interactant intactId="EBI-10107866">
        <id>B1AXD8</id>
    </interactant>
    <interactant intactId="EBI-10107924">
        <id>Q9EST8</id>
        <label>Nfkbiz</label>
    </interactant>
    <organismsDiffer>false</organismsDiffer>
    <experiments>3</experiments>
</comment>
<comment type="interaction">
    <interactant intactId="EBI-10107866">
        <id>B1AXD8</id>
    </interactant>
    <interactant intactId="EBI-371529">
        <id>Q61466</id>
        <label>Smarcd1</label>
    </interactant>
    <organismsDiffer>false</organismsDiffer>
    <experiments>2</experiments>
</comment>
<comment type="interaction">
    <interactant intactId="EBI-10107866">
        <id>B1AXD8</id>
    </interactant>
    <interactant intactId="EBI-3939694">
        <id>Q9BYH8</id>
        <label>NFKBIZ</label>
    </interactant>
    <organismsDiffer>true</organismsDiffer>
    <experiments>3</experiments>
</comment>
<comment type="subcellular location">
    <subcellularLocation>
        <location evidence="4 7 8">Nucleus</location>
    </subcellularLocation>
    <subcellularLocation>
        <location evidence="8">Cytoplasm</location>
    </subcellularLocation>
    <subcellularLocation>
        <location evidence="8">Membrane</location>
    </subcellularLocation>
    <text evidence="8">Present mainly in the nuclear fraction, and at much lower level in the cytoplasmic and membrane fractions.</text>
</comment>
<comment type="developmental stage">
    <text evidence="6 7 8">Expressed throughout cortical development: present throughout the cortical wall at all of these ages, with strong expression in the early ventricular zone and the embryonic preplate/cortical plate (PubMed:27871306). Expressed in the developing limb: expressed in the forelimb bud and somites at 10.5 dpc, as well as in the apical ectodermal ridge (AER) (PubMed:30116001). Ubiquitously expressed throughout the embryonic forelimb at 10.5 dpc: expressed in the dermomyotome and sclerotome divisions of the somite (at protein level) (PubMed:30801883).</text>
</comment>
<comment type="PTM">
    <text evidence="2">Polyubiquitinated. Polyubiquitination is dependent of UBR5 that extends pre-ubiquitinated AKIRIN2.</text>
</comment>
<comment type="disruption phenotype">
    <text evidence="3 4 5 6 7 8">Mice are embryonic lethal (PubMed:18066067). Null mutant embryos could not be detected even on embryonic day 9.5 (PubMed:18066067). Conditional deletion in macrophages impairs proinflammatory cytokine production in response to Listeria infection and clearance of infecting bacteria (PubMed:25107474). Conditional deletion in B-cells causes a decrease in the splenic B-cell numbers, leading to severe proliferation and activation defects in B-cells (PubMed:26041538). The B-cell viability is also impaired, leading to decreased immune responses to T-dependent and T-independent antigens (PubMed:26041538). Conditional deletion in the cortex leads to severe microcephaly: mice do not survive past birth and exhibit extreme microcephaly, with little dorsal telencephalic tissue and no recognizable cortex (PubMed:27871306). Defects in the cortex are caused to massive cell death of early cortical progenitors (PubMed:27871306). Conditional deletion in somitic muscle precursor cells results in neonatal lethality: mutant embryos show a complete lack of forelimb, intercostal and diaphragm muscles due to extensive apoptosis and loss of myoblasts (PubMed:30801883). Embryos lacking Akirin2 in somitic muscle precursor cells also display severe skeletal defects, including craniofacial abnormalities, disrupted ossification and rib fusions (PubMed:30801883). Conditional deletion in limb bud epithelium leads to soft-tissue syndactyly, characterized by a loss of interdigital cell death and an increase in cell proliferation, resulting in retention of the interdigital web (PubMed:30116001).</text>
</comment>
<comment type="miscellaneous">
    <text evidence="11">'Akiraka ni suru' means 'making things clear' in Japanese. The name is given based on the presence of the clear nuclear localization signal.</text>
</comment>
<comment type="similarity">
    <text evidence="10">Belongs to the akirin family.</text>
</comment>
<comment type="sequence caution" evidence="10">
    <conflict type="frameshift">
        <sequence resource="EMBL-CDS" id="BAB24265"/>
    </conflict>
</comment>
<evidence type="ECO:0000250" key="1">
    <source>
        <dbReference type="UniProtKB" id="Q25C79"/>
    </source>
</evidence>
<evidence type="ECO:0000250" key="2">
    <source>
        <dbReference type="UniProtKB" id="Q53H80"/>
    </source>
</evidence>
<evidence type="ECO:0000269" key="3">
    <source>
    </source>
</evidence>
<evidence type="ECO:0000269" key="4">
    <source>
    </source>
</evidence>
<evidence type="ECO:0000269" key="5">
    <source>
    </source>
</evidence>
<evidence type="ECO:0000269" key="6">
    <source>
    </source>
</evidence>
<evidence type="ECO:0000269" key="7">
    <source>
    </source>
</evidence>
<evidence type="ECO:0000269" key="8">
    <source>
    </source>
</evidence>
<evidence type="ECO:0000303" key="9">
    <source>
    </source>
</evidence>
<evidence type="ECO:0000305" key="10"/>
<evidence type="ECO:0000305" key="11">
    <source>
    </source>
</evidence>
<evidence type="ECO:0000312" key="12">
    <source>
        <dbReference type="EMBL" id="BAB24265.1"/>
    </source>
</evidence>
<evidence type="ECO:0000312" key="13">
    <source>
        <dbReference type="MGI" id="MGI:1889364"/>
    </source>
</evidence>
<evidence type="ECO:0007744" key="14">
    <source>
    </source>
</evidence>
<evidence type="ECO:0007744" key="15">
    <source>
    </source>
</evidence>